<organism>
    <name type="scientific">Streptomyces coelicolor (strain ATCC BAA-471 / A3(2) / M145)</name>
    <dbReference type="NCBI Taxonomy" id="100226"/>
    <lineage>
        <taxon>Bacteria</taxon>
        <taxon>Bacillati</taxon>
        <taxon>Actinomycetota</taxon>
        <taxon>Actinomycetes</taxon>
        <taxon>Kitasatosporales</taxon>
        <taxon>Streptomycetaceae</taxon>
        <taxon>Streptomyces</taxon>
        <taxon>Streptomyces albidoflavus group</taxon>
    </lineage>
</organism>
<keyword id="KW-0067">ATP-binding</keyword>
<keyword id="KW-0520">NAD</keyword>
<keyword id="KW-0547">Nucleotide-binding</keyword>
<keyword id="KW-0548">Nucleotidyltransferase</keyword>
<keyword id="KW-0662">Pyridine nucleotide biosynthesis</keyword>
<keyword id="KW-1185">Reference proteome</keyword>
<keyword id="KW-0808">Transferase</keyword>
<evidence type="ECO:0000250" key="1"/>
<evidence type="ECO:0000305" key="2"/>
<reference key="1">
    <citation type="journal article" date="2002" name="Nature">
        <title>Complete genome sequence of the model actinomycete Streptomyces coelicolor A3(2).</title>
        <authorList>
            <person name="Bentley S.D."/>
            <person name="Chater K.F."/>
            <person name="Cerdeno-Tarraga A.-M."/>
            <person name="Challis G.L."/>
            <person name="Thomson N.R."/>
            <person name="James K.D."/>
            <person name="Harris D.E."/>
            <person name="Quail M.A."/>
            <person name="Kieser H."/>
            <person name="Harper D."/>
            <person name="Bateman A."/>
            <person name="Brown S."/>
            <person name="Chandra G."/>
            <person name="Chen C.W."/>
            <person name="Collins M."/>
            <person name="Cronin A."/>
            <person name="Fraser A."/>
            <person name="Goble A."/>
            <person name="Hidalgo J."/>
            <person name="Hornsby T."/>
            <person name="Howarth S."/>
            <person name="Huang C.-H."/>
            <person name="Kieser T."/>
            <person name="Larke L."/>
            <person name="Murphy L.D."/>
            <person name="Oliver K."/>
            <person name="O'Neil S."/>
            <person name="Rabbinowitsch E."/>
            <person name="Rajandream M.A."/>
            <person name="Rutherford K.M."/>
            <person name="Rutter S."/>
            <person name="Seeger K."/>
            <person name="Saunders D."/>
            <person name="Sharp S."/>
            <person name="Squares R."/>
            <person name="Squares S."/>
            <person name="Taylor K."/>
            <person name="Warren T."/>
            <person name="Wietzorrek A."/>
            <person name="Woodward J.R."/>
            <person name="Barrell B.G."/>
            <person name="Parkhill J."/>
            <person name="Hopwood D.A."/>
        </authorList>
    </citation>
    <scope>NUCLEOTIDE SEQUENCE [LARGE SCALE GENOMIC DNA]</scope>
    <source>
        <strain>ATCC BAA-471 / A3(2) / M145</strain>
    </source>
</reference>
<name>NADD_STRCO</name>
<accession>Q9RDK7</accession>
<gene>
    <name type="primary">nadD</name>
    <name type="ordered locus">SCO2579</name>
    <name type="ORF">SCC123.17c</name>
</gene>
<proteinExistence type="inferred from homology"/>
<sequence length="188" mass="20581">MGGTFDPIHHGHLVAASEVAAQFQLDEVVFVPTGQPWQKSHRAVSAAEDRYLMTVVATVENPQFSVSRIDIDRGGPTYTVDTLRDLRALNPDADLFFITGADALAQILTWRDSEELFSLAHFIGVTRPGHTLTDAGLPKGGVSLVEVPALAISSTDCRARVAKGDPVWYLVPDGVVRYIDKRHLYRGE</sequence>
<feature type="chain" id="PRO_0000181451" description="Probable nicotinate-nucleotide adenylyltransferase">
    <location>
        <begin position="1"/>
        <end position="188"/>
    </location>
</feature>
<protein>
    <recommendedName>
        <fullName>Probable nicotinate-nucleotide adenylyltransferase</fullName>
        <ecNumber>2.7.7.18</ecNumber>
    </recommendedName>
    <alternativeName>
        <fullName>Deamido-NAD(+) diphosphorylase</fullName>
    </alternativeName>
    <alternativeName>
        <fullName>Deamido-NAD(+) pyrophosphorylase</fullName>
    </alternativeName>
    <alternativeName>
        <fullName>Nicotinate mononucleotide adenylyltransferase</fullName>
        <shortName>NaMN adenylyltransferase</shortName>
    </alternativeName>
</protein>
<dbReference type="EC" id="2.7.7.18"/>
<dbReference type="EMBL" id="AL939113">
    <property type="protein sequence ID" value="CAB66257.1"/>
    <property type="status" value="ALT_INIT"/>
    <property type="molecule type" value="Genomic_DNA"/>
</dbReference>
<dbReference type="RefSeq" id="NP_626817.1">
    <property type="nucleotide sequence ID" value="NC_003888.3"/>
</dbReference>
<dbReference type="SMR" id="Q9RDK7"/>
<dbReference type="FunCoup" id="Q9RDK7">
    <property type="interactions" value="161"/>
</dbReference>
<dbReference type="STRING" id="100226.gene:17760183"/>
<dbReference type="PaxDb" id="100226-SCO2579"/>
<dbReference type="KEGG" id="sco:SCO2579"/>
<dbReference type="PATRIC" id="fig|100226.15.peg.2624"/>
<dbReference type="eggNOG" id="COG1057">
    <property type="taxonomic scope" value="Bacteria"/>
</dbReference>
<dbReference type="HOGENOM" id="CLU_069765_1_1_11"/>
<dbReference type="InParanoid" id="Q9RDK7"/>
<dbReference type="OrthoDB" id="5295945at2"/>
<dbReference type="PhylomeDB" id="Q9RDK7"/>
<dbReference type="UniPathway" id="UPA00253">
    <property type="reaction ID" value="UER00332"/>
</dbReference>
<dbReference type="Proteomes" id="UP000001973">
    <property type="component" value="Chromosome"/>
</dbReference>
<dbReference type="GO" id="GO:0005524">
    <property type="term" value="F:ATP binding"/>
    <property type="evidence" value="ECO:0007669"/>
    <property type="project" value="UniProtKB-KW"/>
</dbReference>
<dbReference type="GO" id="GO:0000309">
    <property type="term" value="F:nicotinamide-nucleotide adenylyltransferase activity"/>
    <property type="evidence" value="ECO:0000318"/>
    <property type="project" value="GO_Central"/>
</dbReference>
<dbReference type="GO" id="GO:0004515">
    <property type="term" value="F:nicotinate-nucleotide adenylyltransferase activity"/>
    <property type="evidence" value="ECO:0000318"/>
    <property type="project" value="GO_Central"/>
</dbReference>
<dbReference type="GO" id="GO:0009435">
    <property type="term" value="P:NAD biosynthetic process"/>
    <property type="evidence" value="ECO:0000318"/>
    <property type="project" value="GO_Central"/>
</dbReference>
<dbReference type="CDD" id="cd02165">
    <property type="entry name" value="NMNAT"/>
    <property type="match status" value="1"/>
</dbReference>
<dbReference type="FunFam" id="3.40.50.620:FF:000039">
    <property type="entry name" value="Probable nicotinate-nucleotide adenylyltransferase"/>
    <property type="match status" value="1"/>
</dbReference>
<dbReference type="Gene3D" id="3.40.50.620">
    <property type="entry name" value="HUPs"/>
    <property type="match status" value="1"/>
</dbReference>
<dbReference type="HAMAP" id="MF_00244">
    <property type="entry name" value="NaMN_adenylyltr"/>
    <property type="match status" value="1"/>
</dbReference>
<dbReference type="InterPro" id="IPR004821">
    <property type="entry name" value="Cyt_trans-like"/>
</dbReference>
<dbReference type="InterPro" id="IPR005248">
    <property type="entry name" value="NadD/NMNAT"/>
</dbReference>
<dbReference type="InterPro" id="IPR014729">
    <property type="entry name" value="Rossmann-like_a/b/a_fold"/>
</dbReference>
<dbReference type="NCBIfam" id="TIGR00125">
    <property type="entry name" value="cyt_tran_rel"/>
    <property type="match status" value="1"/>
</dbReference>
<dbReference type="NCBIfam" id="TIGR00482">
    <property type="entry name" value="nicotinate (nicotinamide) nucleotide adenylyltransferase"/>
    <property type="match status" value="1"/>
</dbReference>
<dbReference type="NCBIfam" id="NF000840">
    <property type="entry name" value="PRK00071.1-3"/>
    <property type="match status" value="1"/>
</dbReference>
<dbReference type="PANTHER" id="PTHR39321">
    <property type="entry name" value="NICOTINATE-NUCLEOTIDE ADENYLYLTRANSFERASE-RELATED"/>
    <property type="match status" value="1"/>
</dbReference>
<dbReference type="PANTHER" id="PTHR39321:SF3">
    <property type="entry name" value="PHOSPHOPANTETHEINE ADENYLYLTRANSFERASE"/>
    <property type="match status" value="1"/>
</dbReference>
<dbReference type="Pfam" id="PF01467">
    <property type="entry name" value="CTP_transf_like"/>
    <property type="match status" value="1"/>
</dbReference>
<dbReference type="SUPFAM" id="SSF52374">
    <property type="entry name" value="Nucleotidylyl transferase"/>
    <property type="match status" value="1"/>
</dbReference>
<comment type="function">
    <text evidence="1">Catalyzes the reversible adenylation of nicotinate mononucleotide (NaMN) to nicotinic acid adenine dinucleotide (NaAD).</text>
</comment>
<comment type="catalytic activity">
    <reaction>
        <text>nicotinate beta-D-ribonucleotide + ATP + H(+) = deamido-NAD(+) + diphosphate</text>
        <dbReference type="Rhea" id="RHEA:22860"/>
        <dbReference type="ChEBI" id="CHEBI:15378"/>
        <dbReference type="ChEBI" id="CHEBI:30616"/>
        <dbReference type="ChEBI" id="CHEBI:33019"/>
        <dbReference type="ChEBI" id="CHEBI:57502"/>
        <dbReference type="ChEBI" id="CHEBI:58437"/>
        <dbReference type="EC" id="2.7.7.18"/>
    </reaction>
</comment>
<comment type="pathway">
    <text>Cofactor biosynthesis; NAD(+) biosynthesis; deamido-NAD(+) from nicotinate D-ribonucleotide: step 1/1.</text>
</comment>
<comment type="similarity">
    <text evidence="2">Belongs to the NadD family.</text>
</comment>
<comment type="sequence caution" evidence="2">
    <conflict type="erroneous initiation">
        <sequence resource="EMBL-CDS" id="CAB66257"/>
    </conflict>
</comment>